<name>Y2001_SYNS9</name>
<organism>
    <name type="scientific">Synechococcus sp. (strain CC9902)</name>
    <dbReference type="NCBI Taxonomy" id="316279"/>
    <lineage>
        <taxon>Bacteria</taxon>
        <taxon>Bacillati</taxon>
        <taxon>Cyanobacteriota</taxon>
        <taxon>Cyanophyceae</taxon>
        <taxon>Synechococcales</taxon>
        <taxon>Synechococcaceae</taxon>
        <taxon>Synechococcus</taxon>
    </lineage>
</organism>
<comment type="cofactor">
    <cofactor evidence="1">
        <name>Fe(2+)</name>
        <dbReference type="ChEBI" id="CHEBI:29033"/>
    </cofactor>
    <text evidence="1">Binds 1 Fe(2+) ion per subunit.</text>
</comment>
<comment type="cofactor">
    <cofactor evidence="1">
        <name>L-ascorbate</name>
        <dbReference type="ChEBI" id="CHEBI:38290"/>
    </cofactor>
</comment>
<dbReference type="EC" id="1.14.11.-" evidence="1"/>
<dbReference type="EMBL" id="CP000097">
    <property type="protein sequence ID" value="ABB26959.1"/>
    <property type="molecule type" value="Genomic_DNA"/>
</dbReference>
<dbReference type="RefSeq" id="WP_011360750.1">
    <property type="nucleotide sequence ID" value="NC_007513.1"/>
</dbReference>
<dbReference type="SMR" id="Q3AUN6"/>
<dbReference type="STRING" id="316279.Syncc9902_2001"/>
<dbReference type="KEGG" id="sye:Syncc9902_2001"/>
<dbReference type="eggNOG" id="COG3128">
    <property type="taxonomic scope" value="Bacteria"/>
</dbReference>
<dbReference type="HOGENOM" id="CLU_106663_0_0_3"/>
<dbReference type="OrthoDB" id="9812472at2"/>
<dbReference type="Proteomes" id="UP000002712">
    <property type="component" value="Chromosome"/>
</dbReference>
<dbReference type="GO" id="GO:0016706">
    <property type="term" value="F:2-oxoglutarate-dependent dioxygenase activity"/>
    <property type="evidence" value="ECO:0007669"/>
    <property type="project" value="UniProtKB-UniRule"/>
</dbReference>
<dbReference type="GO" id="GO:0005506">
    <property type="term" value="F:iron ion binding"/>
    <property type="evidence" value="ECO:0007669"/>
    <property type="project" value="UniProtKB-UniRule"/>
</dbReference>
<dbReference type="GO" id="GO:0031418">
    <property type="term" value="F:L-ascorbic acid binding"/>
    <property type="evidence" value="ECO:0007669"/>
    <property type="project" value="UniProtKB-KW"/>
</dbReference>
<dbReference type="GO" id="GO:0006974">
    <property type="term" value="P:DNA damage response"/>
    <property type="evidence" value="ECO:0007669"/>
    <property type="project" value="TreeGrafter"/>
</dbReference>
<dbReference type="GO" id="GO:0006879">
    <property type="term" value="P:intracellular iron ion homeostasis"/>
    <property type="evidence" value="ECO:0007669"/>
    <property type="project" value="TreeGrafter"/>
</dbReference>
<dbReference type="Gene3D" id="2.60.120.620">
    <property type="entry name" value="q2cbj1_9rhob like domain"/>
    <property type="match status" value="1"/>
</dbReference>
<dbReference type="HAMAP" id="MF_00657">
    <property type="entry name" value="Hydroxyl_YbiX"/>
    <property type="match status" value="1"/>
</dbReference>
<dbReference type="InterPro" id="IPR005123">
    <property type="entry name" value="Oxoglu/Fe-dep_dioxygenase_dom"/>
</dbReference>
<dbReference type="InterPro" id="IPR023550">
    <property type="entry name" value="PKHD_hydroxylase"/>
</dbReference>
<dbReference type="InterPro" id="IPR006620">
    <property type="entry name" value="Pro_4_hyd_alph"/>
</dbReference>
<dbReference type="InterPro" id="IPR044862">
    <property type="entry name" value="Pro_4_hyd_alph_FE2OG_OXY"/>
</dbReference>
<dbReference type="NCBIfam" id="NF003974">
    <property type="entry name" value="PRK05467.1-3"/>
    <property type="match status" value="1"/>
</dbReference>
<dbReference type="PANTHER" id="PTHR41536">
    <property type="entry name" value="PKHD-TYPE HYDROXYLASE YBIX"/>
    <property type="match status" value="1"/>
</dbReference>
<dbReference type="PANTHER" id="PTHR41536:SF1">
    <property type="entry name" value="PKHD-TYPE HYDROXYLASE YBIX"/>
    <property type="match status" value="1"/>
</dbReference>
<dbReference type="Pfam" id="PF13640">
    <property type="entry name" value="2OG-FeII_Oxy_3"/>
    <property type="match status" value="1"/>
</dbReference>
<dbReference type="SMART" id="SM00702">
    <property type="entry name" value="P4Hc"/>
    <property type="match status" value="1"/>
</dbReference>
<dbReference type="SUPFAM" id="SSF51197">
    <property type="entry name" value="Clavaminate synthase-like"/>
    <property type="match status" value="1"/>
</dbReference>
<dbReference type="PROSITE" id="PS51471">
    <property type="entry name" value="FE2OG_OXY"/>
    <property type="match status" value="1"/>
</dbReference>
<reference key="1">
    <citation type="submission" date="2005-08" db="EMBL/GenBank/DDBJ databases">
        <title>Complete sequence of Synechococcus sp. CC9902.</title>
        <authorList>
            <person name="Copeland A."/>
            <person name="Lucas S."/>
            <person name="Lapidus A."/>
            <person name="Barry K."/>
            <person name="Detter J.C."/>
            <person name="Glavina T."/>
            <person name="Hammon N."/>
            <person name="Israni S."/>
            <person name="Pitluck S."/>
            <person name="Martinez M."/>
            <person name="Schmutz J."/>
            <person name="Larimer F."/>
            <person name="Land M."/>
            <person name="Kyrpides N."/>
            <person name="Ivanova N."/>
            <person name="Richardson P."/>
        </authorList>
    </citation>
    <scope>NUCLEOTIDE SEQUENCE [LARGE SCALE GENOMIC DNA]</scope>
    <source>
        <strain>CC9902</strain>
    </source>
</reference>
<sequence>MDFLTSELLGVEETLQLTSELTNRESIWLDGRLTAGEHAALVKHNRQLDPSLPLARSIAEIVEQKIIDSPLLKSFALIRRVHSILISRSEVGDGYGWHVDNPFSKHGRRDLSFTLFLSDLSDYEGGELTFQLLQGSKEIRLPAGQIILYPSSSLHCVQPISSGVRLVCVGWIESYIQSTEDRSLLFNLDAGAKGLLARHGRSDELDLIFQAYANAVRRLSGR</sequence>
<evidence type="ECO:0000255" key="1">
    <source>
        <dbReference type="HAMAP-Rule" id="MF_00657"/>
    </source>
</evidence>
<accession>Q3AUN6</accession>
<proteinExistence type="inferred from homology"/>
<feature type="chain" id="PRO_0000346530" description="PKHD-type hydroxylase Syncc9902_2001">
    <location>
        <begin position="1"/>
        <end position="222"/>
    </location>
</feature>
<feature type="domain" description="Fe2OG dioxygenase" evidence="1">
    <location>
        <begin position="80"/>
        <end position="174"/>
    </location>
</feature>
<feature type="binding site" evidence="1">
    <location>
        <position position="98"/>
    </location>
    <ligand>
        <name>Fe cation</name>
        <dbReference type="ChEBI" id="CHEBI:24875"/>
    </ligand>
</feature>
<feature type="binding site" evidence="1">
    <location>
        <position position="100"/>
    </location>
    <ligand>
        <name>Fe cation</name>
        <dbReference type="ChEBI" id="CHEBI:24875"/>
    </ligand>
</feature>
<feature type="binding site" evidence="1">
    <location>
        <position position="155"/>
    </location>
    <ligand>
        <name>Fe cation</name>
        <dbReference type="ChEBI" id="CHEBI:24875"/>
    </ligand>
</feature>
<feature type="binding site" evidence="1">
    <location>
        <position position="165"/>
    </location>
    <ligand>
        <name>2-oxoglutarate</name>
        <dbReference type="ChEBI" id="CHEBI:16810"/>
    </ligand>
</feature>
<keyword id="KW-0223">Dioxygenase</keyword>
<keyword id="KW-0408">Iron</keyword>
<keyword id="KW-0479">Metal-binding</keyword>
<keyword id="KW-0560">Oxidoreductase</keyword>
<keyword id="KW-1185">Reference proteome</keyword>
<keyword id="KW-0847">Vitamin C</keyword>
<gene>
    <name type="ordered locus">Syncc9902_2001</name>
</gene>
<protein>
    <recommendedName>
        <fullName evidence="1">PKHD-type hydroxylase Syncc9902_2001</fullName>
        <ecNumber evidence="1">1.14.11.-</ecNumber>
    </recommendedName>
</protein>